<gene>
    <name evidence="1" type="primary">dnaA</name>
    <name type="ordered locus">NATL1_06201</name>
</gene>
<sequence>MPTRDELWTKVQKLLQKNLSKPSYETWIRPAEFFDFKDGCLTLLAPNSFSSDWLRKNYSQTIEEIASETFGHEVKVHIKVKEEFSSNKSNKKKNFSNVEANSIATSENSDVKSKQTPIKKFLPSLNLRYVFNRFVVGPNSRMAHAAAMAVAEAPGREFNPLFICGGVGLGKTHLMQSIGHYRLEIDPGAKVAYVSTETFTNDLIVAIRKDGMQAFRNRYREADLILVDDIQFIEGKEYTQEEFFHTFNALHEAGRQIVLTSDRPPSQIPRLQERLISRFSMGLIADIQAPDLETRMAILQKKAEHERMRLPRDLIQFIAGRFTSNIRELEGAFTRAVAFASITGLPMTVESVAPMLDPTGQGVEVKPKQVLEKVAEVFGVTEEEMRSPSRRRPVSQARQVGMYLMRHGTDLSLPRIGESFGGKDHTTVMYAIEQVEKKLSSEPQLASQVQKVKDLLQIDSRKRR</sequence>
<comment type="function">
    <text evidence="1">Plays an essential role in the initiation and regulation of chromosomal replication. ATP-DnaA binds to the origin of replication (oriC) to initiate formation of the DNA replication initiation complex once per cell cycle. Binds the DnaA box (a 9 base pair repeat at the origin) and separates the double-stranded (ds)DNA. Forms a right-handed helical filament on oriC DNA; dsDNA binds to the exterior of the filament while single-stranded (ss)DNA is stabiized in the filament's interior. The ATP-DnaA-oriC complex binds and stabilizes one strand of the AT-rich DNA unwinding element (DUE), permitting loading of DNA polymerase. After initiation quickly degrades to an ADP-DnaA complex that is not apt for DNA replication. Binds acidic phospholipids.</text>
</comment>
<comment type="subunit">
    <text evidence="1">Oligomerizes as a right-handed, spiral filament on DNA at oriC.</text>
</comment>
<comment type="subcellular location">
    <subcellularLocation>
        <location evidence="1">Cytoplasm</location>
    </subcellularLocation>
</comment>
<comment type="domain">
    <text evidence="1">Domain I is involved in oligomerization and binding regulators, domain II is flexibile and of varying length in different bacteria, domain III forms the AAA+ region, while domain IV binds dsDNA.</text>
</comment>
<comment type="similarity">
    <text evidence="1">Belongs to the DnaA family.</text>
</comment>
<feature type="chain" id="PRO_1000048686" description="Chromosomal replication initiator protein DnaA">
    <location>
        <begin position="1"/>
        <end position="464"/>
    </location>
</feature>
<feature type="region of interest" description="Domain I, interacts with DnaA modulators" evidence="1">
    <location>
        <begin position="1"/>
        <end position="84"/>
    </location>
</feature>
<feature type="region of interest" description="Domain II" evidence="1">
    <location>
        <begin position="84"/>
        <end position="123"/>
    </location>
</feature>
<feature type="region of interest" description="Domain III, AAA+ region" evidence="1">
    <location>
        <begin position="124"/>
        <end position="340"/>
    </location>
</feature>
<feature type="region of interest" description="Domain IV, binds dsDNA" evidence="1">
    <location>
        <begin position="341"/>
        <end position="464"/>
    </location>
</feature>
<feature type="binding site" evidence="1">
    <location>
        <position position="168"/>
    </location>
    <ligand>
        <name>ATP</name>
        <dbReference type="ChEBI" id="CHEBI:30616"/>
    </ligand>
</feature>
<feature type="binding site" evidence="1">
    <location>
        <position position="170"/>
    </location>
    <ligand>
        <name>ATP</name>
        <dbReference type="ChEBI" id="CHEBI:30616"/>
    </ligand>
</feature>
<feature type="binding site" evidence="1">
    <location>
        <position position="171"/>
    </location>
    <ligand>
        <name>ATP</name>
        <dbReference type="ChEBI" id="CHEBI:30616"/>
    </ligand>
</feature>
<feature type="binding site" evidence="1">
    <location>
        <position position="172"/>
    </location>
    <ligand>
        <name>ATP</name>
        <dbReference type="ChEBI" id="CHEBI:30616"/>
    </ligand>
</feature>
<organism>
    <name type="scientific">Prochlorococcus marinus (strain NATL1A)</name>
    <dbReference type="NCBI Taxonomy" id="167555"/>
    <lineage>
        <taxon>Bacteria</taxon>
        <taxon>Bacillati</taxon>
        <taxon>Cyanobacteriota</taxon>
        <taxon>Cyanophyceae</taxon>
        <taxon>Synechococcales</taxon>
        <taxon>Prochlorococcaceae</taxon>
        <taxon>Prochlorococcus</taxon>
    </lineage>
</organism>
<dbReference type="EMBL" id="CP000553">
    <property type="protein sequence ID" value="ABM75182.1"/>
    <property type="molecule type" value="Genomic_DNA"/>
</dbReference>
<dbReference type="SMR" id="A2C122"/>
<dbReference type="KEGG" id="pme:NATL1_06201"/>
<dbReference type="eggNOG" id="COG0593">
    <property type="taxonomic scope" value="Bacteria"/>
</dbReference>
<dbReference type="HOGENOM" id="CLU_026910_3_1_3"/>
<dbReference type="Proteomes" id="UP000002592">
    <property type="component" value="Chromosome"/>
</dbReference>
<dbReference type="GO" id="GO:0005737">
    <property type="term" value="C:cytoplasm"/>
    <property type="evidence" value="ECO:0007669"/>
    <property type="project" value="UniProtKB-SubCell"/>
</dbReference>
<dbReference type="GO" id="GO:0005886">
    <property type="term" value="C:plasma membrane"/>
    <property type="evidence" value="ECO:0007669"/>
    <property type="project" value="TreeGrafter"/>
</dbReference>
<dbReference type="GO" id="GO:0005524">
    <property type="term" value="F:ATP binding"/>
    <property type="evidence" value="ECO:0007669"/>
    <property type="project" value="UniProtKB-UniRule"/>
</dbReference>
<dbReference type="GO" id="GO:0016887">
    <property type="term" value="F:ATP hydrolysis activity"/>
    <property type="evidence" value="ECO:0007669"/>
    <property type="project" value="InterPro"/>
</dbReference>
<dbReference type="GO" id="GO:0003688">
    <property type="term" value="F:DNA replication origin binding"/>
    <property type="evidence" value="ECO:0007669"/>
    <property type="project" value="UniProtKB-UniRule"/>
</dbReference>
<dbReference type="GO" id="GO:0008289">
    <property type="term" value="F:lipid binding"/>
    <property type="evidence" value="ECO:0007669"/>
    <property type="project" value="UniProtKB-KW"/>
</dbReference>
<dbReference type="GO" id="GO:0006270">
    <property type="term" value="P:DNA replication initiation"/>
    <property type="evidence" value="ECO:0007669"/>
    <property type="project" value="UniProtKB-UniRule"/>
</dbReference>
<dbReference type="GO" id="GO:0006275">
    <property type="term" value="P:regulation of DNA replication"/>
    <property type="evidence" value="ECO:0007669"/>
    <property type="project" value="UniProtKB-UniRule"/>
</dbReference>
<dbReference type="CDD" id="cd00009">
    <property type="entry name" value="AAA"/>
    <property type="match status" value="1"/>
</dbReference>
<dbReference type="CDD" id="cd06571">
    <property type="entry name" value="Bac_DnaA_C"/>
    <property type="match status" value="1"/>
</dbReference>
<dbReference type="FunFam" id="3.40.50.300:FF:000668">
    <property type="entry name" value="Chromosomal replication initiator protein DnaA"/>
    <property type="match status" value="1"/>
</dbReference>
<dbReference type="Gene3D" id="1.10.1750.10">
    <property type="match status" value="1"/>
</dbReference>
<dbReference type="Gene3D" id="1.10.8.60">
    <property type="match status" value="1"/>
</dbReference>
<dbReference type="Gene3D" id="3.30.300.180">
    <property type="match status" value="1"/>
</dbReference>
<dbReference type="Gene3D" id="3.40.50.300">
    <property type="entry name" value="P-loop containing nucleotide triphosphate hydrolases"/>
    <property type="match status" value="1"/>
</dbReference>
<dbReference type="HAMAP" id="MF_00377">
    <property type="entry name" value="DnaA_bact"/>
    <property type="match status" value="1"/>
</dbReference>
<dbReference type="InterPro" id="IPR003593">
    <property type="entry name" value="AAA+_ATPase"/>
</dbReference>
<dbReference type="InterPro" id="IPR001957">
    <property type="entry name" value="Chromosome_initiator_DnaA"/>
</dbReference>
<dbReference type="InterPro" id="IPR020591">
    <property type="entry name" value="Chromosome_initiator_DnaA-like"/>
</dbReference>
<dbReference type="InterPro" id="IPR018312">
    <property type="entry name" value="Chromosome_initiator_DnaA_CS"/>
</dbReference>
<dbReference type="InterPro" id="IPR013159">
    <property type="entry name" value="DnaA_C"/>
</dbReference>
<dbReference type="InterPro" id="IPR013317">
    <property type="entry name" value="DnaA_dom"/>
</dbReference>
<dbReference type="InterPro" id="IPR024633">
    <property type="entry name" value="DnaA_N_dom"/>
</dbReference>
<dbReference type="InterPro" id="IPR038454">
    <property type="entry name" value="DnaA_N_sf"/>
</dbReference>
<dbReference type="InterPro" id="IPR027417">
    <property type="entry name" value="P-loop_NTPase"/>
</dbReference>
<dbReference type="InterPro" id="IPR010921">
    <property type="entry name" value="Trp_repressor/repl_initiator"/>
</dbReference>
<dbReference type="NCBIfam" id="TIGR00362">
    <property type="entry name" value="DnaA"/>
    <property type="match status" value="1"/>
</dbReference>
<dbReference type="PANTHER" id="PTHR30050">
    <property type="entry name" value="CHROMOSOMAL REPLICATION INITIATOR PROTEIN DNAA"/>
    <property type="match status" value="1"/>
</dbReference>
<dbReference type="PANTHER" id="PTHR30050:SF2">
    <property type="entry name" value="CHROMOSOMAL REPLICATION INITIATOR PROTEIN DNAA"/>
    <property type="match status" value="1"/>
</dbReference>
<dbReference type="Pfam" id="PF00308">
    <property type="entry name" value="Bac_DnaA"/>
    <property type="match status" value="1"/>
</dbReference>
<dbReference type="Pfam" id="PF08299">
    <property type="entry name" value="Bac_DnaA_C"/>
    <property type="match status" value="1"/>
</dbReference>
<dbReference type="Pfam" id="PF11638">
    <property type="entry name" value="DnaA_N"/>
    <property type="match status" value="1"/>
</dbReference>
<dbReference type="PRINTS" id="PR00051">
    <property type="entry name" value="DNAA"/>
</dbReference>
<dbReference type="SMART" id="SM00382">
    <property type="entry name" value="AAA"/>
    <property type="match status" value="1"/>
</dbReference>
<dbReference type="SMART" id="SM00760">
    <property type="entry name" value="Bac_DnaA_C"/>
    <property type="match status" value="1"/>
</dbReference>
<dbReference type="SUPFAM" id="SSF52540">
    <property type="entry name" value="P-loop containing nucleoside triphosphate hydrolases"/>
    <property type="match status" value="1"/>
</dbReference>
<dbReference type="SUPFAM" id="SSF48295">
    <property type="entry name" value="TrpR-like"/>
    <property type="match status" value="1"/>
</dbReference>
<dbReference type="PROSITE" id="PS01008">
    <property type="entry name" value="DNAA"/>
    <property type="match status" value="1"/>
</dbReference>
<evidence type="ECO:0000255" key="1">
    <source>
        <dbReference type="HAMAP-Rule" id="MF_00377"/>
    </source>
</evidence>
<accession>A2C122</accession>
<proteinExistence type="inferred from homology"/>
<reference key="1">
    <citation type="journal article" date="2007" name="PLoS Genet.">
        <title>Patterns and implications of gene gain and loss in the evolution of Prochlorococcus.</title>
        <authorList>
            <person name="Kettler G.C."/>
            <person name="Martiny A.C."/>
            <person name="Huang K."/>
            <person name="Zucker J."/>
            <person name="Coleman M.L."/>
            <person name="Rodrigue S."/>
            <person name="Chen F."/>
            <person name="Lapidus A."/>
            <person name="Ferriera S."/>
            <person name="Johnson J."/>
            <person name="Steglich C."/>
            <person name="Church G.M."/>
            <person name="Richardson P."/>
            <person name="Chisholm S.W."/>
        </authorList>
    </citation>
    <scope>NUCLEOTIDE SEQUENCE [LARGE SCALE GENOMIC DNA]</scope>
    <source>
        <strain>NATL1A</strain>
    </source>
</reference>
<name>DNAA_PROM1</name>
<keyword id="KW-0067">ATP-binding</keyword>
<keyword id="KW-0963">Cytoplasm</keyword>
<keyword id="KW-0235">DNA replication</keyword>
<keyword id="KW-0238">DNA-binding</keyword>
<keyword id="KW-0446">Lipid-binding</keyword>
<keyword id="KW-0547">Nucleotide-binding</keyword>
<protein>
    <recommendedName>
        <fullName evidence="1">Chromosomal replication initiator protein DnaA</fullName>
    </recommendedName>
</protein>